<keyword id="KW-0963">Cytoplasm</keyword>
<keyword id="KW-0275">Fatty acid biosynthesis</keyword>
<keyword id="KW-0276">Fatty acid metabolism</keyword>
<keyword id="KW-0444">Lipid biosynthesis</keyword>
<keyword id="KW-0443">Lipid metabolism</keyword>
<keyword id="KW-0596">Phosphopantetheine</keyword>
<keyword id="KW-0597">Phosphoprotein</keyword>
<accession>Q2SXU4</accession>
<reference key="1">
    <citation type="journal article" date="2005" name="BMC Genomics">
        <title>Bacterial genome adaptation to niches: divergence of the potential virulence genes in three Burkholderia species of different survival strategies.</title>
        <authorList>
            <person name="Kim H.S."/>
            <person name="Schell M.A."/>
            <person name="Yu Y."/>
            <person name="Ulrich R.L."/>
            <person name="Sarria S.H."/>
            <person name="Nierman W.C."/>
            <person name="DeShazer D."/>
        </authorList>
    </citation>
    <scope>NUCLEOTIDE SEQUENCE [LARGE SCALE GENOMIC DNA]</scope>
    <source>
        <strain>ATCC 700388 / DSM 13276 / CCUG 48851 / CIP 106301 / E264</strain>
    </source>
</reference>
<protein>
    <recommendedName>
        <fullName evidence="1">Acyl carrier protein</fullName>
        <shortName evidence="1">ACP</shortName>
    </recommendedName>
</protein>
<dbReference type="EMBL" id="CP000086">
    <property type="protein sequence ID" value="ABC37460.1"/>
    <property type="molecule type" value="Genomic_DNA"/>
</dbReference>
<dbReference type="RefSeq" id="WP_004197638.1">
    <property type="nucleotide sequence ID" value="NZ_CP008785.1"/>
</dbReference>
<dbReference type="SMR" id="Q2SXU4"/>
<dbReference type="GeneID" id="98102461"/>
<dbReference type="KEGG" id="bte:BTH_I1720"/>
<dbReference type="HOGENOM" id="CLU_108696_5_1_4"/>
<dbReference type="UniPathway" id="UPA00094"/>
<dbReference type="Proteomes" id="UP000001930">
    <property type="component" value="Chromosome I"/>
</dbReference>
<dbReference type="GO" id="GO:0005829">
    <property type="term" value="C:cytosol"/>
    <property type="evidence" value="ECO:0007669"/>
    <property type="project" value="TreeGrafter"/>
</dbReference>
<dbReference type="GO" id="GO:0016020">
    <property type="term" value="C:membrane"/>
    <property type="evidence" value="ECO:0007669"/>
    <property type="project" value="GOC"/>
</dbReference>
<dbReference type="GO" id="GO:0000035">
    <property type="term" value="F:acyl binding"/>
    <property type="evidence" value="ECO:0007669"/>
    <property type="project" value="TreeGrafter"/>
</dbReference>
<dbReference type="GO" id="GO:0000036">
    <property type="term" value="F:acyl carrier activity"/>
    <property type="evidence" value="ECO:0007669"/>
    <property type="project" value="UniProtKB-UniRule"/>
</dbReference>
<dbReference type="GO" id="GO:0009245">
    <property type="term" value="P:lipid A biosynthetic process"/>
    <property type="evidence" value="ECO:0007669"/>
    <property type="project" value="TreeGrafter"/>
</dbReference>
<dbReference type="FunFam" id="1.10.1200.10:FF:000001">
    <property type="entry name" value="Acyl carrier protein"/>
    <property type="match status" value="1"/>
</dbReference>
<dbReference type="Gene3D" id="1.10.1200.10">
    <property type="entry name" value="ACP-like"/>
    <property type="match status" value="1"/>
</dbReference>
<dbReference type="HAMAP" id="MF_01217">
    <property type="entry name" value="Acyl_carrier"/>
    <property type="match status" value="1"/>
</dbReference>
<dbReference type="InterPro" id="IPR003231">
    <property type="entry name" value="ACP"/>
</dbReference>
<dbReference type="InterPro" id="IPR036736">
    <property type="entry name" value="ACP-like_sf"/>
</dbReference>
<dbReference type="InterPro" id="IPR009081">
    <property type="entry name" value="PP-bd_ACP"/>
</dbReference>
<dbReference type="InterPro" id="IPR006162">
    <property type="entry name" value="Ppantetheine_attach_site"/>
</dbReference>
<dbReference type="NCBIfam" id="TIGR00517">
    <property type="entry name" value="acyl_carrier"/>
    <property type="match status" value="1"/>
</dbReference>
<dbReference type="NCBIfam" id="NF002148">
    <property type="entry name" value="PRK00982.1-2"/>
    <property type="match status" value="1"/>
</dbReference>
<dbReference type="NCBIfam" id="NF002149">
    <property type="entry name" value="PRK00982.1-3"/>
    <property type="match status" value="1"/>
</dbReference>
<dbReference type="NCBIfam" id="NF002150">
    <property type="entry name" value="PRK00982.1-4"/>
    <property type="match status" value="1"/>
</dbReference>
<dbReference type="NCBIfam" id="NF002151">
    <property type="entry name" value="PRK00982.1-5"/>
    <property type="match status" value="1"/>
</dbReference>
<dbReference type="PANTHER" id="PTHR20863">
    <property type="entry name" value="ACYL CARRIER PROTEIN"/>
    <property type="match status" value="1"/>
</dbReference>
<dbReference type="PANTHER" id="PTHR20863:SF76">
    <property type="entry name" value="CARRIER DOMAIN-CONTAINING PROTEIN"/>
    <property type="match status" value="1"/>
</dbReference>
<dbReference type="Pfam" id="PF00550">
    <property type="entry name" value="PP-binding"/>
    <property type="match status" value="1"/>
</dbReference>
<dbReference type="SUPFAM" id="SSF47336">
    <property type="entry name" value="ACP-like"/>
    <property type="match status" value="1"/>
</dbReference>
<dbReference type="PROSITE" id="PS50075">
    <property type="entry name" value="CARRIER"/>
    <property type="match status" value="1"/>
</dbReference>
<dbReference type="PROSITE" id="PS00012">
    <property type="entry name" value="PHOSPHOPANTETHEINE"/>
    <property type="match status" value="1"/>
</dbReference>
<sequence>MDNIEQRVKKIVAEQLGVAEAEIKNEASFVNDLGADSLDTVELVMALEDEFGMEIPDEEAEKITTVQQAIDYARANVKA</sequence>
<proteinExistence type="inferred from homology"/>
<feature type="chain" id="PRO_1000066578" description="Acyl carrier protein">
    <location>
        <begin position="1"/>
        <end position="79"/>
    </location>
</feature>
<feature type="domain" description="Carrier" evidence="2">
    <location>
        <begin position="2"/>
        <end position="77"/>
    </location>
</feature>
<feature type="modified residue" description="O-(pantetheine 4'-phosphoryl)serine" evidence="2">
    <location>
        <position position="37"/>
    </location>
</feature>
<organism>
    <name type="scientific">Burkholderia thailandensis (strain ATCC 700388 / DSM 13276 / CCUG 48851 / CIP 106301 / E264)</name>
    <dbReference type="NCBI Taxonomy" id="271848"/>
    <lineage>
        <taxon>Bacteria</taxon>
        <taxon>Pseudomonadati</taxon>
        <taxon>Pseudomonadota</taxon>
        <taxon>Betaproteobacteria</taxon>
        <taxon>Burkholderiales</taxon>
        <taxon>Burkholderiaceae</taxon>
        <taxon>Burkholderia</taxon>
        <taxon>pseudomallei group</taxon>
    </lineage>
</organism>
<comment type="function">
    <text evidence="1">Carrier of the growing fatty acid chain in fatty acid biosynthesis.</text>
</comment>
<comment type="pathway">
    <text evidence="1">Lipid metabolism; fatty acid biosynthesis.</text>
</comment>
<comment type="subcellular location">
    <subcellularLocation>
        <location evidence="1">Cytoplasm</location>
    </subcellularLocation>
</comment>
<comment type="PTM">
    <text evidence="1">4'-phosphopantetheine is transferred from CoA to a specific serine of apo-ACP by AcpS. This modification is essential for activity because fatty acids are bound in thioester linkage to the sulfhydryl of the prosthetic group.</text>
</comment>
<comment type="similarity">
    <text evidence="1">Belongs to the acyl carrier protein (ACP) family.</text>
</comment>
<name>ACP_BURTA</name>
<evidence type="ECO:0000255" key="1">
    <source>
        <dbReference type="HAMAP-Rule" id="MF_01217"/>
    </source>
</evidence>
<evidence type="ECO:0000255" key="2">
    <source>
        <dbReference type="PROSITE-ProRule" id="PRU00258"/>
    </source>
</evidence>
<gene>
    <name evidence="1" type="primary">acpP</name>
    <name type="ordered locus">BTH_I1720</name>
</gene>